<accession>Q977Q3</accession>
<organism>
    <name type="scientific">Thermococcus litoralis</name>
    <dbReference type="NCBI Taxonomy" id="2265"/>
    <lineage>
        <taxon>Archaea</taxon>
        <taxon>Methanobacteriati</taxon>
        <taxon>Methanobacteriota</taxon>
        <taxon>Thermococci</taxon>
        <taxon>Thermococcales</taxon>
        <taxon>Thermococcaceae</taxon>
        <taxon>Thermococcus</taxon>
    </lineage>
</organism>
<comment type="function">
    <text evidence="1">Catalyzes the phosphorylation of fructose 6-phosphate to fructose 1,6-bisphosphate using ADP as the phosphate donor.</text>
</comment>
<comment type="catalytic activity">
    <reaction evidence="1">
        <text>beta-D-fructose 6-phosphate + ADP = beta-D-fructose 1,6-bisphosphate + AMP + H(+)</text>
        <dbReference type="Rhea" id="RHEA:20105"/>
        <dbReference type="ChEBI" id="CHEBI:15378"/>
        <dbReference type="ChEBI" id="CHEBI:32966"/>
        <dbReference type="ChEBI" id="CHEBI:57634"/>
        <dbReference type="ChEBI" id="CHEBI:456215"/>
        <dbReference type="ChEBI" id="CHEBI:456216"/>
        <dbReference type="EC" id="2.7.1.146"/>
    </reaction>
</comment>
<comment type="cofactor">
    <cofactor evidence="1">
        <name>Mg(2+)</name>
        <dbReference type="ChEBI" id="CHEBI:18420"/>
    </cofactor>
    <text evidence="1">Binds 1 Mg(2+) ion per subunit.</text>
</comment>
<comment type="pathway">
    <text evidence="1">Carbohydrate degradation; glycolysis.</text>
</comment>
<comment type="subcellular location">
    <subcellularLocation>
        <location evidence="1">Cytoplasm</location>
    </subcellularLocation>
</comment>
<comment type="similarity">
    <text evidence="1">Belongs to the carbohydrate kinase PfkC family.</text>
</comment>
<protein>
    <recommendedName>
        <fullName evidence="1">ADP-specific phosphofructokinase</fullName>
        <ecNumber evidence="1">2.7.1.146</ecNumber>
    </recommendedName>
    <alternativeName>
        <fullName evidence="1">ADP-dependent phosphofructokinase</fullName>
        <shortName evidence="1">ADP-Pfk</shortName>
    </alternativeName>
</protein>
<keyword id="KW-0963">Cytoplasm</keyword>
<keyword id="KW-0324">Glycolysis</keyword>
<keyword id="KW-0418">Kinase</keyword>
<keyword id="KW-0460">Magnesium</keyword>
<keyword id="KW-0479">Metal-binding</keyword>
<keyword id="KW-0808">Transferase</keyword>
<gene>
    <name evidence="1" type="primary">pfkC</name>
    <name type="synonym">pfk</name>
</gene>
<reference key="1">
    <citation type="submission" date="2000-10" db="EMBL/GenBank/DDBJ databases">
        <title>Molecular characterization of ADP-dependent phosphofructokinase from a hyperthermophile.</title>
        <authorList>
            <person name="Jeong J."/>
            <person name="Ito S."/>
            <person name="Fushinobu S."/>
            <person name="Wakagi T."/>
        </authorList>
    </citation>
    <scope>NUCLEOTIDE SEQUENCE [GENOMIC DNA]</scope>
</reference>
<evidence type="ECO:0000255" key="1">
    <source>
        <dbReference type="HAMAP-Rule" id="MF_00561"/>
    </source>
</evidence>
<feature type="chain" id="PRO_0000184769" description="ADP-specific phosphofructokinase">
    <location>
        <begin position="1"/>
        <end position="459"/>
    </location>
</feature>
<feature type="domain" description="ADPK" evidence="1">
    <location>
        <begin position="1"/>
        <end position="457"/>
    </location>
</feature>
<feature type="active site" description="Proton acceptor" evidence="1">
    <location>
        <position position="441"/>
    </location>
</feature>
<feature type="binding site" evidence="1">
    <location>
        <position position="268"/>
    </location>
    <ligand>
        <name>Mg(2+)</name>
        <dbReference type="ChEBI" id="CHEBI:18420"/>
    </ligand>
</feature>
<feature type="binding site" evidence="1">
    <location>
        <position position="298"/>
    </location>
    <ligand>
        <name>Mg(2+)</name>
        <dbReference type="ChEBI" id="CHEBI:18420"/>
    </ligand>
</feature>
<feature type="binding site" evidence="1">
    <location>
        <position position="441"/>
    </location>
    <ligand>
        <name>Mg(2+)</name>
        <dbReference type="ChEBI" id="CHEBI:18420"/>
    </ligand>
</feature>
<dbReference type="EC" id="2.7.1.146" evidence="1"/>
<dbReference type="EMBL" id="AB050016">
    <property type="protein sequence ID" value="BAB69952.1"/>
    <property type="molecule type" value="Genomic_DNA"/>
</dbReference>
<dbReference type="SMR" id="Q977Q3"/>
<dbReference type="GeneID" id="16548417"/>
<dbReference type="OMA" id="QIHTIYY"/>
<dbReference type="BRENDA" id="2.7.1.146">
    <property type="organism ID" value="6302"/>
</dbReference>
<dbReference type="UniPathway" id="UPA00109"/>
<dbReference type="GO" id="GO:0005737">
    <property type="term" value="C:cytoplasm"/>
    <property type="evidence" value="ECO:0007669"/>
    <property type="project" value="UniProtKB-SubCell"/>
</dbReference>
<dbReference type="GO" id="GO:0043844">
    <property type="term" value="F:ADP-specific phosphofructokinase activity"/>
    <property type="evidence" value="ECO:0007669"/>
    <property type="project" value="UniProtKB-EC"/>
</dbReference>
<dbReference type="GO" id="GO:0000287">
    <property type="term" value="F:magnesium ion binding"/>
    <property type="evidence" value="ECO:0007669"/>
    <property type="project" value="InterPro"/>
</dbReference>
<dbReference type="GO" id="GO:0008443">
    <property type="term" value="F:phosphofructokinase activity"/>
    <property type="evidence" value="ECO:0007669"/>
    <property type="project" value="InterPro"/>
</dbReference>
<dbReference type="GO" id="GO:0006000">
    <property type="term" value="P:fructose metabolic process"/>
    <property type="evidence" value="ECO:0007669"/>
    <property type="project" value="InterPro"/>
</dbReference>
<dbReference type="GO" id="GO:0006096">
    <property type="term" value="P:glycolytic process"/>
    <property type="evidence" value="ECO:0007669"/>
    <property type="project" value="UniProtKB-UniRule"/>
</dbReference>
<dbReference type="Gene3D" id="3.30.1110.20">
    <property type="match status" value="1"/>
</dbReference>
<dbReference type="Gene3D" id="3.40.1190.20">
    <property type="match status" value="1"/>
</dbReference>
<dbReference type="HAMAP" id="MF_00561">
    <property type="entry name" value="ADP_PFKinase"/>
    <property type="match status" value="1"/>
</dbReference>
<dbReference type="InterPro" id="IPR007666">
    <property type="entry name" value="ADP_PFK/GK"/>
</dbReference>
<dbReference type="InterPro" id="IPR015990">
    <property type="entry name" value="ADP_PFK/GK_arc"/>
</dbReference>
<dbReference type="InterPro" id="IPR011790">
    <property type="entry name" value="ADP_PFK_arc"/>
</dbReference>
<dbReference type="InterPro" id="IPR029056">
    <property type="entry name" value="Ribokinase-like"/>
</dbReference>
<dbReference type="NCBIfam" id="TIGR02045">
    <property type="entry name" value="P_fruct_ADP"/>
    <property type="match status" value="1"/>
</dbReference>
<dbReference type="PANTHER" id="PTHR21208">
    <property type="entry name" value="ADP-DEPENDENT GLUCOKINASE"/>
    <property type="match status" value="1"/>
</dbReference>
<dbReference type="PANTHER" id="PTHR21208:SF1">
    <property type="entry name" value="ADP-DEPENDENT GLUCOKINASE"/>
    <property type="match status" value="1"/>
</dbReference>
<dbReference type="Pfam" id="PF04587">
    <property type="entry name" value="ADP_PFK_GK"/>
    <property type="match status" value="1"/>
</dbReference>
<dbReference type="PIRSF" id="PIRSF015883">
    <property type="entry name" value="ADP-Pfk_glckin"/>
    <property type="match status" value="1"/>
</dbReference>
<dbReference type="SUPFAM" id="SSF53613">
    <property type="entry name" value="Ribokinase-like"/>
    <property type="match status" value="1"/>
</dbReference>
<dbReference type="PROSITE" id="PS51255">
    <property type="entry name" value="ADPK"/>
    <property type="match status" value="1"/>
</dbReference>
<proteinExistence type="inferred from homology"/>
<name>K6PF_THELI</name>
<sequence length="459" mass="52852">MMEFLKDFQKMGIYLAYNVNVDAIVYLNEKHIESLIKEFGAENIKKRIDEYPREINEPLDFVARLIHALKTGKPQAVPLVSYEADKWFNSRFKYDFERIGGQVGVIANLLANLDFNKVIAYSPLLGRKQAEMFVNRDNLLYPVVENGKLVLKKPLEAYREDDPVKINRIFEFRAGTKFKLGDETIEVPYSGRFIVACRFEDFARIETSPELKPYLPEIGEMVDGAILSGYQGLRRYYSDGKDANYYLRKAKEDIKLLKKKKDIKIHVEFASIQDRELRKKVIYNIFPLVDSVGMDEAEIAHILSVLGYRELSDRIFTYNRIEDAVLGAKILLDELNLEILQVHTIYYLMYITHNDNPLTEEELTKSLEVGTTLAAARAFLGDIKRPEDVKVGLNIPFNEKGEYVKLRFEEAKAKMRTREYKIVIIPTRLVRNPVSTVGLGDTISAGAFASYLSLLKRKE</sequence>